<sequence length="409" mass="46653">MSSHPIQVFSEIGKLKKVMLHRPGKELENLLPDYLERLLFDDIPFLEDAQKEHDAFAQALRDEGIEVLYLEQLAAESLTSPEIRDQFIEEYLDEANIRDRQTKVAIRELLHGIKDNQELVEKTMAGIQKVELPEIPDEAKDLTDLVESDYPFAIDPMPNLYFTRDPFATIGNAVSLNHMFADTRNRETLYGKYIFKYHPIYGGKVDLVYNREEDTRIEGGDELVLSKDVLAVGISQRTDAASIEKLLVNIFKKNVGFKKVLAFEFANNRKFMHLDTVFTMVDYDKFTIHPEIEGDLHVYSVTYENEKLKIVEEKGDLAELLAQNLGVEKVHLIRCGGGNIVAAAREQWNDGSNTLTIAPGVVVVYDRNTVTNKILEEYGLRLIKIRGSELVRGRGGPRCMSMPFEREEV</sequence>
<reference key="1">
    <citation type="journal article" date="2009" name="J. Bacteriol.">
        <title>Role of conjugative elements in the evolution of the multidrug-resistant pandemic clone Streptococcus pneumoniae Spain23F ST81.</title>
        <authorList>
            <person name="Croucher N.J."/>
            <person name="Walker D."/>
            <person name="Romero P."/>
            <person name="Lennard N."/>
            <person name="Paterson G.K."/>
            <person name="Bason N.C."/>
            <person name="Mitchell A.M."/>
            <person name="Quail M.A."/>
            <person name="Andrew P.W."/>
            <person name="Parkhill J."/>
            <person name="Bentley S.D."/>
            <person name="Mitchell T.J."/>
        </authorList>
    </citation>
    <scope>NUCLEOTIDE SEQUENCE [LARGE SCALE GENOMIC DNA]</scope>
    <source>
        <strain>ATCC 700669 / Spain 23F-1</strain>
    </source>
</reference>
<gene>
    <name evidence="1" type="primary">arcA</name>
    <name type="ordered locus">SPN23F21800</name>
</gene>
<feature type="chain" id="PRO_1000125324" description="Arginine deiminase">
    <location>
        <begin position="1"/>
        <end position="409"/>
    </location>
</feature>
<feature type="active site" description="Amidino-cysteine intermediate" evidence="1">
    <location>
        <position position="399"/>
    </location>
</feature>
<protein>
    <recommendedName>
        <fullName evidence="1">Arginine deiminase</fullName>
        <shortName evidence="1">ADI</shortName>
        <ecNumber evidence="1">3.5.3.6</ecNumber>
    </recommendedName>
    <alternativeName>
        <fullName evidence="1">Arginine dihydrolase</fullName>
        <shortName evidence="1">AD</shortName>
    </alternativeName>
</protein>
<dbReference type="EC" id="3.5.3.6" evidence="1"/>
<dbReference type="EMBL" id="FM211187">
    <property type="protein sequence ID" value="CAR69914.1"/>
    <property type="molecule type" value="Genomic_DNA"/>
</dbReference>
<dbReference type="RefSeq" id="WP_000094616.1">
    <property type="nucleotide sequence ID" value="NC_011900.1"/>
</dbReference>
<dbReference type="SMR" id="B8ZPY7"/>
<dbReference type="GeneID" id="45652626"/>
<dbReference type="KEGG" id="sne:SPN23F21800"/>
<dbReference type="HOGENOM" id="CLU_052662_0_1_9"/>
<dbReference type="UniPathway" id="UPA00254">
    <property type="reaction ID" value="UER00364"/>
</dbReference>
<dbReference type="GO" id="GO:0005737">
    <property type="term" value="C:cytoplasm"/>
    <property type="evidence" value="ECO:0007669"/>
    <property type="project" value="UniProtKB-SubCell"/>
</dbReference>
<dbReference type="GO" id="GO:0016990">
    <property type="term" value="F:arginine deiminase activity"/>
    <property type="evidence" value="ECO:0007669"/>
    <property type="project" value="UniProtKB-UniRule"/>
</dbReference>
<dbReference type="GO" id="GO:0019547">
    <property type="term" value="P:arginine catabolic process to ornithine"/>
    <property type="evidence" value="ECO:0007669"/>
    <property type="project" value="UniProtKB-UniRule"/>
</dbReference>
<dbReference type="GO" id="GO:0019546">
    <property type="term" value="P:arginine deiminase pathway"/>
    <property type="evidence" value="ECO:0007669"/>
    <property type="project" value="TreeGrafter"/>
</dbReference>
<dbReference type="FunFam" id="1.10.3930.10:FF:000003">
    <property type="entry name" value="Arginine deiminase"/>
    <property type="match status" value="1"/>
</dbReference>
<dbReference type="Gene3D" id="1.10.3930.10">
    <property type="entry name" value="Arginine deiminase"/>
    <property type="match status" value="1"/>
</dbReference>
<dbReference type="Gene3D" id="3.75.10.10">
    <property type="entry name" value="L-arginine/glycine Amidinotransferase, Chain A"/>
    <property type="match status" value="1"/>
</dbReference>
<dbReference type="HAMAP" id="MF_00242">
    <property type="entry name" value="Arg_deiminase"/>
    <property type="match status" value="1"/>
</dbReference>
<dbReference type="InterPro" id="IPR003876">
    <property type="entry name" value="Arg_deiminase"/>
</dbReference>
<dbReference type="NCBIfam" id="TIGR01078">
    <property type="entry name" value="arcA"/>
    <property type="match status" value="1"/>
</dbReference>
<dbReference type="NCBIfam" id="NF002381">
    <property type="entry name" value="PRK01388.1"/>
    <property type="match status" value="1"/>
</dbReference>
<dbReference type="PANTHER" id="PTHR47271">
    <property type="entry name" value="ARGININE DEIMINASE"/>
    <property type="match status" value="1"/>
</dbReference>
<dbReference type="PANTHER" id="PTHR47271:SF2">
    <property type="entry name" value="ARGININE DEIMINASE"/>
    <property type="match status" value="1"/>
</dbReference>
<dbReference type="Pfam" id="PF02274">
    <property type="entry name" value="ADI"/>
    <property type="match status" value="1"/>
</dbReference>
<dbReference type="PIRSF" id="PIRSF006356">
    <property type="entry name" value="Arg_deiminase"/>
    <property type="match status" value="1"/>
</dbReference>
<dbReference type="PRINTS" id="PR01466">
    <property type="entry name" value="ARGDEIMINASE"/>
</dbReference>
<dbReference type="SUPFAM" id="SSF55909">
    <property type="entry name" value="Pentein"/>
    <property type="match status" value="1"/>
</dbReference>
<accession>B8ZPY7</accession>
<evidence type="ECO:0000255" key="1">
    <source>
        <dbReference type="HAMAP-Rule" id="MF_00242"/>
    </source>
</evidence>
<organism>
    <name type="scientific">Streptococcus pneumoniae (strain ATCC 700669 / Spain 23F-1)</name>
    <dbReference type="NCBI Taxonomy" id="561276"/>
    <lineage>
        <taxon>Bacteria</taxon>
        <taxon>Bacillati</taxon>
        <taxon>Bacillota</taxon>
        <taxon>Bacilli</taxon>
        <taxon>Lactobacillales</taxon>
        <taxon>Streptococcaceae</taxon>
        <taxon>Streptococcus</taxon>
    </lineage>
</organism>
<comment type="catalytic activity">
    <reaction evidence="1">
        <text>L-arginine + H2O = L-citrulline + NH4(+)</text>
        <dbReference type="Rhea" id="RHEA:19597"/>
        <dbReference type="ChEBI" id="CHEBI:15377"/>
        <dbReference type="ChEBI" id="CHEBI:28938"/>
        <dbReference type="ChEBI" id="CHEBI:32682"/>
        <dbReference type="ChEBI" id="CHEBI:57743"/>
        <dbReference type="EC" id="3.5.3.6"/>
    </reaction>
</comment>
<comment type="pathway">
    <text evidence="1">Amino-acid degradation; L-arginine degradation via ADI pathway; carbamoyl phosphate from L-arginine: step 1/2.</text>
</comment>
<comment type="subcellular location">
    <subcellularLocation>
        <location evidence="1">Cytoplasm</location>
    </subcellularLocation>
</comment>
<comment type="similarity">
    <text evidence="1">Belongs to the arginine deiminase family.</text>
</comment>
<name>ARCA_STRPJ</name>
<proteinExistence type="inferred from homology"/>
<keyword id="KW-0056">Arginine metabolism</keyword>
<keyword id="KW-0963">Cytoplasm</keyword>
<keyword id="KW-0378">Hydrolase</keyword>